<protein>
    <recommendedName>
        <fullName evidence="1">Ribosome modulation factor</fullName>
        <shortName evidence="1">RMF</shortName>
    </recommendedName>
</protein>
<keyword id="KW-0963">Cytoplasm</keyword>
<keyword id="KW-0810">Translation regulation</keyword>
<gene>
    <name evidence="1" type="primary">rmf</name>
    <name type="ordered locus">PSPPH_2078</name>
</gene>
<name>RMF_PSE14</name>
<organism>
    <name type="scientific">Pseudomonas savastanoi pv. phaseolicola (strain 1448A / Race 6)</name>
    <name type="common">Pseudomonas syringae pv. phaseolicola (strain 1448A / Race 6)</name>
    <dbReference type="NCBI Taxonomy" id="264730"/>
    <lineage>
        <taxon>Bacteria</taxon>
        <taxon>Pseudomonadati</taxon>
        <taxon>Pseudomonadota</taxon>
        <taxon>Gammaproteobacteria</taxon>
        <taxon>Pseudomonadales</taxon>
        <taxon>Pseudomonadaceae</taxon>
        <taxon>Pseudomonas</taxon>
    </lineage>
</organism>
<accession>Q48JX9</accession>
<feature type="chain" id="PRO_0000416479" description="Ribosome modulation factor">
    <location>
        <begin position="1"/>
        <end position="71"/>
    </location>
</feature>
<sequence length="71" mass="8192">MRRLKRDPLERAFLRGYQYGVHGKSRELCPFTLPSVRQAWINGWREGRGDNWDGMTGTAGIHRLNELHAVG</sequence>
<dbReference type="EMBL" id="CP000058">
    <property type="protein sequence ID" value="AAZ37324.1"/>
    <property type="status" value="ALT_INIT"/>
    <property type="molecule type" value="Genomic_DNA"/>
</dbReference>
<dbReference type="RefSeq" id="WP_002553055.1">
    <property type="nucleotide sequence ID" value="NC_005773.3"/>
</dbReference>
<dbReference type="SMR" id="Q48JX9"/>
<dbReference type="KEGG" id="psp:PSPPH_2078"/>
<dbReference type="eggNOG" id="COG3130">
    <property type="taxonomic scope" value="Bacteria"/>
</dbReference>
<dbReference type="HOGENOM" id="CLU_2194641_0_0_6"/>
<dbReference type="Proteomes" id="UP000000551">
    <property type="component" value="Chromosome"/>
</dbReference>
<dbReference type="GO" id="GO:0005737">
    <property type="term" value="C:cytoplasm"/>
    <property type="evidence" value="ECO:0007669"/>
    <property type="project" value="UniProtKB-SubCell"/>
</dbReference>
<dbReference type="GO" id="GO:0006417">
    <property type="term" value="P:regulation of translation"/>
    <property type="evidence" value="ECO:0007669"/>
    <property type="project" value="UniProtKB-UniRule"/>
</dbReference>
<dbReference type="Gene3D" id="1.10.10.620">
    <property type="entry name" value="ribosome modulation factor like domain"/>
    <property type="match status" value="1"/>
</dbReference>
<dbReference type="HAMAP" id="MF_00919">
    <property type="entry name" value="RMF"/>
    <property type="match status" value="1"/>
</dbReference>
<dbReference type="InterPro" id="IPR007040">
    <property type="entry name" value="Ribosome_modulation_factor"/>
</dbReference>
<dbReference type="InterPro" id="IPR023200">
    <property type="entry name" value="RMF_sf"/>
</dbReference>
<dbReference type="NCBIfam" id="NF011162">
    <property type="entry name" value="PRK14563.1"/>
    <property type="match status" value="1"/>
</dbReference>
<dbReference type="NCBIfam" id="NF041886">
    <property type="entry name" value="Rmf_CrpP_fam"/>
    <property type="match status" value="1"/>
</dbReference>
<dbReference type="Pfam" id="PF04957">
    <property type="entry name" value="RMF"/>
    <property type="match status" value="1"/>
</dbReference>
<proteinExistence type="inferred from homology"/>
<reference key="1">
    <citation type="journal article" date="2005" name="J. Bacteriol.">
        <title>Whole-genome sequence analysis of Pseudomonas syringae pv. phaseolicola 1448A reveals divergence among pathovars in genes involved in virulence and transposition.</title>
        <authorList>
            <person name="Joardar V."/>
            <person name="Lindeberg M."/>
            <person name="Jackson R.W."/>
            <person name="Selengut J."/>
            <person name="Dodson R."/>
            <person name="Brinkac L.M."/>
            <person name="Daugherty S.C."/>
            <person name="DeBoy R.T."/>
            <person name="Durkin A.S."/>
            <person name="Gwinn Giglio M."/>
            <person name="Madupu R."/>
            <person name="Nelson W.C."/>
            <person name="Rosovitz M.J."/>
            <person name="Sullivan S.A."/>
            <person name="Crabtree J."/>
            <person name="Creasy T."/>
            <person name="Davidsen T.M."/>
            <person name="Haft D.H."/>
            <person name="Zafar N."/>
            <person name="Zhou L."/>
            <person name="Halpin R."/>
            <person name="Holley T."/>
            <person name="Khouri H.M."/>
            <person name="Feldblyum T.V."/>
            <person name="White O."/>
            <person name="Fraser C.M."/>
            <person name="Chatterjee A.K."/>
            <person name="Cartinhour S."/>
            <person name="Schneider D."/>
            <person name="Mansfield J.W."/>
            <person name="Collmer A."/>
            <person name="Buell R."/>
        </authorList>
    </citation>
    <scope>NUCLEOTIDE SEQUENCE [LARGE SCALE GENOMIC DNA]</scope>
    <source>
        <strain>1448A / Race 6</strain>
    </source>
</reference>
<evidence type="ECO:0000255" key="1">
    <source>
        <dbReference type="HAMAP-Rule" id="MF_00919"/>
    </source>
</evidence>
<evidence type="ECO:0000305" key="2"/>
<comment type="function">
    <text evidence="1">During stationary phase, converts 70S ribosomes to an inactive dimeric form (100S ribosomes).</text>
</comment>
<comment type="subcellular location">
    <subcellularLocation>
        <location evidence="1">Cytoplasm</location>
    </subcellularLocation>
</comment>
<comment type="similarity">
    <text evidence="1">Belongs to the ribosome modulation factor family.</text>
</comment>
<comment type="sequence caution" evidence="2">
    <conflict type="erroneous initiation">
        <sequence resource="EMBL-CDS" id="AAZ37324"/>
    </conflict>
    <text>Extended N-terminus.</text>
</comment>